<organism>
    <name type="scientific">Candida albicans (strain SC5314 / ATCC MYA-2876)</name>
    <name type="common">Yeast</name>
    <dbReference type="NCBI Taxonomy" id="237561"/>
    <lineage>
        <taxon>Eukaryota</taxon>
        <taxon>Fungi</taxon>
        <taxon>Dikarya</taxon>
        <taxon>Ascomycota</taxon>
        <taxon>Saccharomycotina</taxon>
        <taxon>Pichiomycetes</taxon>
        <taxon>Debaryomycetaceae</taxon>
        <taxon>Candida/Lodderomyces clade</taxon>
        <taxon>Candida</taxon>
    </lineage>
</organism>
<dbReference type="EMBL" id="CP017624">
    <property type="protein sequence ID" value="AOW27820.1"/>
    <property type="molecule type" value="Genomic_DNA"/>
</dbReference>
<dbReference type="SMR" id="Q59KG2"/>
<dbReference type="BioGRID" id="1231250">
    <property type="interactions" value="2"/>
</dbReference>
<dbReference type="FunCoup" id="Q59KG2">
    <property type="interactions" value="99"/>
</dbReference>
<dbReference type="STRING" id="237561.Q59KG2"/>
<dbReference type="EnsemblFungi" id="C2_08290C_A-T">
    <property type="protein sequence ID" value="C2_08290C_A-T-p1"/>
    <property type="gene ID" value="C2_08290C_A"/>
</dbReference>
<dbReference type="KEGG" id="cal:CAALFM_C208290CA"/>
<dbReference type="CGD" id="CAL0000189412">
    <property type="gene designation" value="UCF1"/>
</dbReference>
<dbReference type="VEuPathDB" id="FungiDB:C2_08290C_A"/>
<dbReference type="eggNOG" id="ENOG502S6JA">
    <property type="taxonomic scope" value="Eukaryota"/>
</dbReference>
<dbReference type="HOGENOM" id="CLU_118207_0_0_1"/>
<dbReference type="InParanoid" id="Q59KG2"/>
<dbReference type="OMA" id="HLKYYPP"/>
<dbReference type="OrthoDB" id="4082176at2759"/>
<dbReference type="PRO" id="PR:Q59KG2"/>
<dbReference type="Proteomes" id="UP000000559">
    <property type="component" value="Chromosome 2"/>
</dbReference>
<dbReference type="GO" id="GO:0005886">
    <property type="term" value="C:plasma membrane"/>
    <property type="evidence" value="ECO:0007669"/>
    <property type="project" value="UniProtKB-SubCell"/>
</dbReference>
<dbReference type="GO" id="GO:0006112">
    <property type="term" value="P:energy reserve metabolic process"/>
    <property type="evidence" value="ECO:0007669"/>
    <property type="project" value="InterPro"/>
</dbReference>
<dbReference type="Gene3D" id="3.40.1000.40">
    <property type="entry name" value="Respiratory growth induced protein 1"/>
    <property type="match status" value="1"/>
</dbReference>
<dbReference type="InterPro" id="IPR022554">
    <property type="entry name" value="RGI1"/>
</dbReference>
<dbReference type="InterPro" id="IPR038235">
    <property type="entry name" value="RGI1_sf"/>
</dbReference>
<dbReference type="Pfam" id="PF10843">
    <property type="entry name" value="RGI1"/>
    <property type="match status" value="1"/>
</dbReference>
<sequence length="201" mass="23654">MAGKKKSKSEALPLDLDNIKPMDHLQPVPKTRSSSITSIESADEPGTMKQVLLPPTIKEFDELEQFESFVRDETWDNDFDYFHGRLHYYPPFVMKSCQNNLEKIKPTMNKNSKKFRRDLQHHIQKHLIKDLEKCCGYELNFGKGEVVETDNKVTWKFKDETDHGFSKEEEDMYDRHWRLELDVSCTNESAMVDVEYKSIPM</sequence>
<proteinExistence type="evidence at transcript level"/>
<accession>Q59KG2</accession>
<accession>A0A1D8PI91</accession>
<evidence type="ECO:0000250" key="1"/>
<evidence type="ECO:0000256" key="2">
    <source>
        <dbReference type="SAM" id="MobiDB-lite"/>
    </source>
</evidence>
<evidence type="ECO:0000269" key="3">
    <source>
    </source>
</evidence>
<evidence type="ECO:0000269" key="4">
    <source>
    </source>
</evidence>
<evidence type="ECO:0000269" key="5">
    <source>
    </source>
</evidence>
<evidence type="ECO:0000305" key="6"/>
<keyword id="KW-1003">Cell membrane</keyword>
<keyword id="KW-0472">Membrane</keyword>
<keyword id="KW-1185">Reference proteome</keyword>
<protein>
    <recommendedName>
        <fullName>Respiratory growth induced protein 1</fullName>
    </recommendedName>
</protein>
<comment type="function">
    <text evidence="1">Involved in the control of energetic metabolism and significantly contribute to cell fitness, especially under respiratory growth conditions.</text>
</comment>
<comment type="subcellular location">
    <subcellularLocation>
        <location evidence="1">Cell membrane</location>
        <topology evidence="1">Peripheral membrane protein</topology>
    </subcellularLocation>
</comment>
<comment type="induction">
    <text evidence="3 4 5">Expression is under the control of RAS1. Up-regulated during colonization of the cecum and invasion of host tissue. Down-regulation correlates with clinical development of fluconazole resistance.</text>
</comment>
<comment type="similarity">
    <text evidence="6">Belongs to the RGI1 family.</text>
</comment>
<name>RGI1_CANAL</name>
<gene>
    <name type="primary">RGI1</name>
    <name type="ordered locus">CAALFM_C208290CA</name>
    <name type="ORF">CaO19.1354</name>
    <name type="ORF">CaO19.2659</name>
    <name type="ORF">CaO19.8934</name>
</gene>
<feature type="chain" id="PRO_0000402279" description="Respiratory growth induced protein 1">
    <location>
        <begin position="1"/>
        <end position="201"/>
    </location>
</feature>
<feature type="region of interest" description="Disordered" evidence="2">
    <location>
        <begin position="1"/>
        <end position="45"/>
    </location>
</feature>
<feature type="compositionally biased region" description="Polar residues" evidence="2">
    <location>
        <begin position="31"/>
        <end position="40"/>
    </location>
</feature>
<reference key="1">
    <citation type="journal article" date="2004" name="Proc. Natl. Acad. Sci. U.S.A.">
        <title>The diploid genome sequence of Candida albicans.</title>
        <authorList>
            <person name="Jones T."/>
            <person name="Federspiel N.A."/>
            <person name="Chibana H."/>
            <person name="Dungan J."/>
            <person name="Kalman S."/>
            <person name="Magee B.B."/>
            <person name="Newport G."/>
            <person name="Thorstenson Y.R."/>
            <person name="Agabian N."/>
            <person name="Magee P.T."/>
            <person name="Davis R.W."/>
            <person name="Scherer S."/>
        </authorList>
    </citation>
    <scope>NUCLEOTIDE SEQUENCE [LARGE SCALE GENOMIC DNA]</scope>
    <source>
        <strain>SC5314 / ATCC MYA-2876</strain>
    </source>
</reference>
<reference key="2">
    <citation type="journal article" date="2007" name="Genome Biol.">
        <title>Assembly of the Candida albicans genome into sixteen supercontigs aligned on the eight chromosomes.</title>
        <authorList>
            <person name="van het Hoog M."/>
            <person name="Rast T.J."/>
            <person name="Martchenko M."/>
            <person name="Grindle S."/>
            <person name="Dignard D."/>
            <person name="Hogues H."/>
            <person name="Cuomo C."/>
            <person name="Berriman M."/>
            <person name="Scherer S."/>
            <person name="Magee B.B."/>
            <person name="Whiteway M."/>
            <person name="Chibana H."/>
            <person name="Nantel A."/>
            <person name="Magee P.T."/>
        </authorList>
    </citation>
    <scope>GENOME REANNOTATION</scope>
    <source>
        <strain>SC5314 / ATCC MYA-2876</strain>
    </source>
</reference>
<reference key="3">
    <citation type="journal article" date="2013" name="Genome Biol.">
        <title>Assembly of a phased diploid Candida albicans genome facilitates allele-specific measurements and provides a simple model for repeat and indel structure.</title>
        <authorList>
            <person name="Muzzey D."/>
            <person name="Schwartz K."/>
            <person name="Weissman J.S."/>
            <person name="Sherlock G."/>
        </authorList>
    </citation>
    <scope>NUCLEOTIDE SEQUENCE [LARGE SCALE GENOMIC DNA]</scope>
    <scope>GENOME REANNOTATION</scope>
    <source>
        <strain>SC5314 / ATCC MYA-2876</strain>
    </source>
</reference>
<reference key="4">
    <citation type="journal article" date="2003" name="Antimicrob. Agents Chemother.">
        <title>Genome-wide expression profile analysis reveals coordinately regulated genes associated with stepwise acquisition of azole resistance in Candida albicans clinical isolates.</title>
        <authorList>
            <person name="Rogers P.D."/>
            <person name="Barker K.S."/>
        </authorList>
    </citation>
    <scope>INDUCTION</scope>
</reference>
<reference key="5">
    <citation type="journal article" date="2004" name="Mol. Biol. Cell">
        <title>Transcription profiling of cyclic AMP signaling in Candida albicans.</title>
        <authorList>
            <person name="Harcus D."/>
            <person name="Nantel A."/>
            <person name="Marcil A."/>
            <person name="Rigby T."/>
            <person name="Whiteway M."/>
        </authorList>
    </citation>
    <scope>INDUCTION</scope>
</reference>
<reference key="6">
    <citation type="journal article" date="2010" name="Eukaryot. Cell">
        <title>Adaptations of Candida albicans for growth in the mammalian intestinal tract.</title>
        <authorList>
            <person name="Rosenbach A."/>
            <person name="Dignard D."/>
            <person name="Pierce J.V."/>
            <person name="Whiteway M."/>
            <person name="Kumamoto C.A."/>
        </authorList>
    </citation>
    <scope>INDUCTION</scope>
</reference>